<reference evidence="3" key="1">
    <citation type="journal article" date="1997" name="J. Biol. Chem.">
        <title>Differential extraction and protein sequencing reveals major differences in patterns of primary cell wall proteins from plants.</title>
        <authorList>
            <person name="Robertson D."/>
            <person name="Mitchell G.P."/>
            <person name="Gilroy J.S."/>
            <person name="Gerrish C."/>
            <person name="Bolwell G.P."/>
            <person name="Slabas A.R."/>
        </authorList>
    </citation>
    <scope>PROTEIN SEQUENCE</scope>
    <scope>SUBCELLULAR LOCATION</scope>
</reference>
<keyword id="KW-0134">Cell wall</keyword>
<keyword id="KW-0903">Direct protein sequencing</keyword>
<keyword id="KW-0964">Secreted</keyword>
<proteinExistence type="evidence at protein level"/>
<accession>P80770</accession>
<name>CWP11_PHAVU</name>
<sequence length="15" mass="1668">YDKKVDSIILFGVNG</sequence>
<evidence type="ECO:0000269" key="1">
    <source>
    </source>
</evidence>
<evidence type="ECO:0000303" key="2">
    <source>
    </source>
</evidence>
<evidence type="ECO:0000305" key="3"/>
<comment type="subcellular location">
    <subcellularLocation>
        <location evidence="1">Secreted</location>
        <location evidence="1">Cell wall</location>
    </subcellularLocation>
</comment>
<protein>
    <recommendedName>
        <fullName>43 kDa cell wall protein</fullName>
    </recommendedName>
</protein>
<feature type="chain" id="PRO_0000079663" description="43 kDa cell wall protein">
    <location>
        <begin position="1"/>
        <end position="15" status="greater than"/>
    </location>
</feature>
<feature type="non-terminal residue" evidence="2">
    <location>
        <position position="15"/>
    </location>
</feature>
<organism>
    <name type="scientific">Phaseolus vulgaris</name>
    <name type="common">Kidney bean</name>
    <name type="synonym">French bean</name>
    <dbReference type="NCBI Taxonomy" id="3885"/>
    <lineage>
        <taxon>Eukaryota</taxon>
        <taxon>Viridiplantae</taxon>
        <taxon>Streptophyta</taxon>
        <taxon>Embryophyta</taxon>
        <taxon>Tracheophyta</taxon>
        <taxon>Spermatophyta</taxon>
        <taxon>Magnoliopsida</taxon>
        <taxon>eudicotyledons</taxon>
        <taxon>Gunneridae</taxon>
        <taxon>Pentapetalae</taxon>
        <taxon>rosids</taxon>
        <taxon>fabids</taxon>
        <taxon>Fabales</taxon>
        <taxon>Fabaceae</taxon>
        <taxon>Papilionoideae</taxon>
        <taxon>50 kb inversion clade</taxon>
        <taxon>NPAAA clade</taxon>
        <taxon>indigoferoid/millettioid clade</taxon>
        <taxon>Phaseoleae</taxon>
        <taxon>Phaseolus</taxon>
    </lineage>
</organism>
<dbReference type="GO" id="GO:0005576">
    <property type="term" value="C:extracellular region"/>
    <property type="evidence" value="ECO:0007669"/>
    <property type="project" value="UniProtKB-KW"/>
</dbReference>